<name>Y678_METJA</name>
<sequence length="320" mass="35674">MKLRFIECHIPKHLFMGIDEIREWDGVIWANVKTNGTISTIQILTTLKDSEKIVDKLKEMYGGANYRVVVFEPTMTYPPIEEEEEKEEPERLIREELYNIASDIANLSKENMLMLILSTIVAIAGIYKDDVALLIASMIIAPLLGPNIALSLSITVADYKLALKSIKTLIAELIFVIILSMIAGHYLPISLDNPQIHSRITLDFWSIIIALSAGIAGSLSTVSNISSIAVGVMIAIALLPPLAVFGLLIGAGYVEQSFSALILFLINMIAINLSAIVIFSAYGISPYRWWKKEEARKYTLYAILLWVTLFIAIFVLIIYH</sequence>
<keyword id="KW-1003">Cell membrane</keyword>
<keyword id="KW-0472">Membrane</keyword>
<keyword id="KW-1185">Reference proteome</keyword>
<keyword id="KW-0812">Transmembrane</keyword>
<keyword id="KW-1133">Transmembrane helix</keyword>
<organism>
    <name type="scientific">Methanocaldococcus jannaschii (strain ATCC 43067 / DSM 2661 / JAL-1 / JCM 10045 / NBRC 100440)</name>
    <name type="common">Methanococcus jannaschii</name>
    <dbReference type="NCBI Taxonomy" id="243232"/>
    <lineage>
        <taxon>Archaea</taxon>
        <taxon>Methanobacteriati</taxon>
        <taxon>Methanobacteriota</taxon>
        <taxon>Methanomada group</taxon>
        <taxon>Methanococci</taxon>
        <taxon>Methanococcales</taxon>
        <taxon>Methanocaldococcaceae</taxon>
        <taxon>Methanocaldococcus</taxon>
    </lineage>
</organism>
<gene>
    <name type="ordered locus">MJ0678</name>
</gene>
<protein>
    <recommendedName>
        <fullName>Uncharacterized protein MJ0678</fullName>
    </recommendedName>
</protein>
<proteinExistence type="predicted"/>
<evidence type="ECO:0000255" key="1"/>
<evidence type="ECO:0000305" key="2"/>
<dbReference type="EMBL" id="L77117">
    <property type="protein sequence ID" value="AAB98673.1"/>
    <property type="molecule type" value="Genomic_DNA"/>
</dbReference>
<dbReference type="PIR" id="F64384">
    <property type="entry name" value="F64384"/>
</dbReference>
<dbReference type="RefSeq" id="WP_010870183.1">
    <property type="nucleotide sequence ID" value="NC_000909.1"/>
</dbReference>
<dbReference type="SMR" id="Q58091"/>
<dbReference type="STRING" id="243232.MJ_0678"/>
<dbReference type="PaxDb" id="243232-MJ_0678"/>
<dbReference type="EnsemblBacteria" id="AAB98673">
    <property type="protein sequence ID" value="AAB98673"/>
    <property type="gene ID" value="MJ_0678"/>
</dbReference>
<dbReference type="GeneID" id="1451544"/>
<dbReference type="KEGG" id="mja:MJ_0678"/>
<dbReference type="eggNOG" id="arCOG02264">
    <property type="taxonomic scope" value="Archaea"/>
</dbReference>
<dbReference type="HOGENOM" id="CLU_050976_0_0_2"/>
<dbReference type="InParanoid" id="Q58091"/>
<dbReference type="OrthoDB" id="3266at2157"/>
<dbReference type="PhylomeDB" id="Q58091"/>
<dbReference type="Proteomes" id="UP000000805">
    <property type="component" value="Chromosome"/>
</dbReference>
<dbReference type="GO" id="GO:0005886">
    <property type="term" value="C:plasma membrane"/>
    <property type="evidence" value="ECO:0007669"/>
    <property type="project" value="UniProtKB-SubCell"/>
</dbReference>
<dbReference type="InterPro" id="IPR005240">
    <property type="entry name" value="DUF389"/>
</dbReference>
<dbReference type="NCBIfam" id="TIGR00341">
    <property type="entry name" value="TIGR00341 family protein"/>
    <property type="match status" value="1"/>
</dbReference>
<dbReference type="NCBIfam" id="TIGR00271">
    <property type="entry name" value="uncharacterized hydrophobic domain"/>
    <property type="match status" value="1"/>
</dbReference>
<dbReference type="PANTHER" id="PTHR20992">
    <property type="entry name" value="AT15442P-RELATED"/>
    <property type="match status" value="1"/>
</dbReference>
<dbReference type="PANTHER" id="PTHR20992:SF9">
    <property type="entry name" value="AT15442P-RELATED"/>
    <property type="match status" value="1"/>
</dbReference>
<dbReference type="Pfam" id="PF04087">
    <property type="entry name" value="DUF389"/>
    <property type="match status" value="1"/>
</dbReference>
<accession>Q58091</accession>
<reference key="1">
    <citation type="journal article" date="1996" name="Science">
        <title>Complete genome sequence of the methanogenic archaeon, Methanococcus jannaschii.</title>
        <authorList>
            <person name="Bult C.J."/>
            <person name="White O."/>
            <person name="Olsen G.J."/>
            <person name="Zhou L."/>
            <person name="Fleischmann R.D."/>
            <person name="Sutton G.G."/>
            <person name="Blake J.A."/>
            <person name="FitzGerald L.M."/>
            <person name="Clayton R.A."/>
            <person name="Gocayne J.D."/>
            <person name="Kerlavage A.R."/>
            <person name="Dougherty B.A."/>
            <person name="Tomb J.-F."/>
            <person name="Adams M.D."/>
            <person name="Reich C.I."/>
            <person name="Overbeek R."/>
            <person name="Kirkness E.F."/>
            <person name="Weinstock K.G."/>
            <person name="Merrick J.M."/>
            <person name="Glodek A."/>
            <person name="Scott J.L."/>
            <person name="Geoghagen N.S.M."/>
            <person name="Weidman J.F."/>
            <person name="Fuhrmann J.L."/>
            <person name="Nguyen D."/>
            <person name="Utterback T.R."/>
            <person name="Kelley J.M."/>
            <person name="Peterson J.D."/>
            <person name="Sadow P.W."/>
            <person name="Hanna M.C."/>
            <person name="Cotton M.D."/>
            <person name="Roberts K.M."/>
            <person name="Hurst M.A."/>
            <person name="Kaine B.P."/>
            <person name="Borodovsky M."/>
            <person name="Klenk H.-P."/>
            <person name="Fraser C.M."/>
            <person name="Smith H.O."/>
            <person name="Woese C.R."/>
            <person name="Venter J.C."/>
        </authorList>
    </citation>
    <scope>NUCLEOTIDE SEQUENCE [LARGE SCALE GENOMIC DNA]</scope>
    <source>
        <strain>ATCC 43067 / DSM 2661 / JAL-1 / JCM 10045 / NBRC 100440</strain>
    </source>
</reference>
<feature type="chain" id="PRO_0000106986" description="Uncharacterized protein MJ0678">
    <location>
        <begin position="1"/>
        <end position="320"/>
    </location>
</feature>
<feature type="transmembrane region" description="Helical" evidence="1">
    <location>
        <begin position="107"/>
        <end position="127"/>
    </location>
</feature>
<feature type="transmembrane region" description="Helical" evidence="1">
    <location>
        <begin position="131"/>
        <end position="151"/>
    </location>
</feature>
<feature type="transmembrane region" description="Helical" evidence="1">
    <location>
        <begin position="169"/>
        <end position="189"/>
    </location>
</feature>
<feature type="transmembrane region" description="Helical" evidence="1">
    <location>
        <begin position="200"/>
        <end position="220"/>
    </location>
</feature>
<feature type="transmembrane region" description="Helical" evidence="1">
    <location>
        <begin position="228"/>
        <end position="248"/>
    </location>
</feature>
<feature type="transmembrane region" description="Helical" evidence="1">
    <location>
        <begin position="260"/>
        <end position="280"/>
    </location>
</feature>
<feature type="transmembrane region" description="Helical" evidence="1">
    <location>
        <begin position="299"/>
        <end position="319"/>
    </location>
</feature>
<comment type="subcellular location">
    <subcellularLocation>
        <location evidence="2">Cell membrane</location>
        <topology evidence="2">Multi-pass membrane protein</topology>
    </subcellularLocation>
</comment>